<sequence>MTLPLHVVILAAGEGKRMRSSLPKVLQPLAGQPMLAHVIATARQLQPAAIHIVYGHGSDQVQAAFADQSDLQWAAQREQLGTGHAVQQAMPAIPDAARVLVLYGDVPLIRSESLLQLLHAPGRMAVLVAELANPTGYGRILRDAEGKVAAIVEQKDANDEQRRIRTINTGILTAESTALRRWLGGLSNDNAQGEFYLTDVFASAAADFTPADMVHVADPQDVEGANDPWQLAQLERAWQLRAARALSLQGVRMADPARVEQRGSVQVGRDVQLDIDVILEGEVTLGDDVVIGPFVRLRDVTLGAGTQVRAHSDLEGVITEGAVQIGPFARLRPGTVLADGVHIGNFVETKKVTMGVDSKANHLTYLGDAVIGSKVNIGAGTITCNYDGVNKSQTTIGDGAFVGSNSALVAPIEIGANSTIGAGSVVTRDAPAGQLTVTRARQTVIEGWERPTKK</sequence>
<evidence type="ECO:0000255" key="1">
    <source>
        <dbReference type="HAMAP-Rule" id="MF_01631"/>
    </source>
</evidence>
<keyword id="KW-0012">Acyltransferase</keyword>
<keyword id="KW-0133">Cell shape</keyword>
<keyword id="KW-0961">Cell wall biogenesis/degradation</keyword>
<keyword id="KW-0963">Cytoplasm</keyword>
<keyword id="KW-0460">Magnesium</keyword>
<keyword id="KW-0479">Metal-binding</keyword>
<keyword id="KW-0511">Multifunctional enzyme</keyword>
<keyword id="KW-0548">Nucleotidyltransferase</keyword>
<keyword id="KW-0573">Peptidoglycan synthesis</keyword>
<keyword id="KW-0677">Repeat</keyword>
<keyword id="KW-0808">Transferase</keyword>
<gene>
    <name evidence="1" type="primary">glmU</name>
    <name type="ordered locus">XOO0673</name>
</gene>
<accession>Q2P7P9</accession>
<name>GLMU_XANOM</name>
<feature type="chain" id="PRO_0000244321" description="Bifunctional protein GlmU">
    <location>
        <begin position="1"/>
        <end position="454"/>
    </location>
</feature>
<feature type="region of interest" description="Pyrophosphorylase" evidence="1">
    <location>
        <begin position="1"/>
        <end position="228"/>
    </location>
</feature>
<feature type="region of interest" description="Linker" evidence="1">
    <location>
        <begin position="229"/>
        <end position="249"/>
    </location>
</feature>
<feature type="region of interest" description="N-acetyltransferase" evidence="1">
    <location>
        <begin position="250"/>
        <end position="454"/>
    </location>
</feature>
<feature type="active site" description="Proton acceptor" evidence="1">
    <location>
        <position position="362"/>
    </location>
</feature>
<feature type="binding site" evidence="1">
    <location>
        <begin position="10"/>
        <end position="13"/>
    </location>
    <ligand>
        <name>UDP-N-acetyl-alpha-D-glucosamine</name>
        <dbReference type="ChEBI" id="CHEBI:57705"/>
    </ligand>
</feature>
<feature type="binding site" evidence="1">
    <location>
        <position position="24"/>
    </location>
    <ligand>
        <name>UDP-N-acetyl-alpha-D-glucosamine</name>
        <dbReference type="ChEBI" id="CHEBI:57705"/>
    </ligand>
</feature>
<feature type="binding site" evidence="1">
    <location>
        <position position="76"/>
    </location>
    <ligand>
        <name>UDP-N-acetyl-alpha-D-glucosamine</name>
        <dbReference type="ChEBI" id="CHEBI:57705"/>
    </ligand>
</feature>
<feature type="binding site" evidence="1">
    <location>
        <begin position="81"/>
        <end position="82"/>
    </location>
    <ligand>
        <name>UDP-N-acetyl-alpha-D-glucosamine</name>
        <dbReference type="ChEBI" id="CHEBI:57705"/>
    </ligand>
</feature>
<feature type="binding site" evidence="1">
    <location>
        <begin position="103"/>
        <end position="105"/>
    </location>
    <ligand>
        <name>UDP-N-acetyl-alpha-D-glucosamine</name>
        <dbReference type="ChEBI" id="CHEBI:57705"/>
    </ligand>
</feature>
<feature type="binding site" evidence="1">
    <location>
        <position position="105"/>
    </location>
    <ligand>
        <name>Mg(2+)</name>
        <dbReference type="ChEBI" id="CHEBI:18420"/>
    </ligand>
</feature>
<feature type="binding site" evidence="1">
    <location>
        <position position="138"/>
    </location>
    <ligand>
        <name>UDP-N-acetyl-alpha-D-glucosamine</name>
        <dbReference type="ChEBI" id="CHEBI:57705"/>
    </ligand>
</feature>
<feature type="binding site" evidence="1">
    <location>
        <position position="153"/>
    </location>
    <ligand>
        <name>UDP-N-acetyl-alpha-D-glucosamine</name>
        <dbReference type="ChEBI" id="CHEBI:57705"/>
    </ligand>
</feature>
<feature type="binding site" evidence="1">
    <location>
        <position position="168"/>
    </location>
    <ligand>
        <name>UDP-N-acetyl-alpha-D-glucosamine</name>
        <dbReference type="ChEBI" id="CHEBI:57705"/>
    </ligand>
</feature>
<feature type="binding site" evidence="1">
    <location>
        <position position="226"/>
    </location>
    <ligand>
        <name>Mg(2+)</name>
        <dbReference type="ChEBI" id="CHEBI:18420"/>
    </ligand>
</feature>
<feature type="binding site" evidence="1">
    <location>
        <position position="226"/>
    </location>
    <ligand>
        <name>UDP-N-acetyl-alpha-D-glucosamine</name>
        <dbReference type="ChEBI" id="CHEBI:57705"/>
    </ligand>
</feature>
<feature type="binding site" evidence="1">
    <location>
        <position position="332"/>
    </location>
    <ligand>
        <name>UDP-N-acetyl-alpha-D-glucosamine</name>
        <dbReference type="ChEBI" id="CHEBI:57705"/>
    </ligand>
</feature>
<feature type="binding site" evidence="1">
    <location>
        <position position="350"/>
    </location>
    <ligand>
        <name>UDP-N-acetyl-alpha-D-glucosamine</name>
        <dbReference type="ChEBI" id="CHEBI:57705"/>
    </ligand>
</feature>
<feature type="binding site" evidence="1">
    <location>
        <position position="365"/>
    </location>
    <ligand>
        <name>UDP-N-acetyl-alpha-D-glucosamine</name>
        <dbReference type="ChEBI" id="CHEBI:57705"/>
    </ligand>
</feature>
<feature type="binding site" evidence="1">
    <location>
        <position position="376"/>
    </location>
    <ligand>
        <name>UDP-N-acetyl-alpha-D-glucosamine</name>
        <dbReference type="ChEBI" id="CHEBI:57705"/>
    </ligand>
</feature>
<feature type="binding site" evidence="1">
    <location>
        <position position="379"/>
    </location>
    <ligand>
        <name>acetyl-CoA</name>
        <dbReference type="ChEBI" id="CHEBI:57288"/>
    </ligand>
</feature>
<feature type="binding site" evidence="1">
    <location>
        <begin position="385"/>
        <end position="386"/>
    </location>
    <ligand>
        <name>acetyl-CoA</name>
        <dbReference type="ChEBI" id="CHEBI:57288"/>
    </ligand>
</feature>
<feature type="binding site" evidence="1">
    <location>
        <position position="404"/>
    </location>
    <ligand>
        <name>acetyl-CoA</name>
        <dbReference type="ChEBI" id="CHEBI:57288"/>
    </ligand>
</feature>
<feature type="binding site" evidence="1">
    <location>
        <position position="422"/>
    </location>
    <ligand>
        <name>acetyl-CoA</name>
        <dbReference type="ChEBI" id="CHEBI:57288"/>
    </ligand>
</feature>
<feature type="binding site" evidence="1">
    <location>
        <position position="439"/>
    </location>
    <ligand>
        <name>acetyl-CoA</name>
        <dbReference type="ChEBI" id="CHEBI:57288"/>
    </ligand>
</feature>
<proteinExistence type="inferred from homology"/>
<comment type="function">
    <text evidence="1">Catalyzes the last two sequential reactions in the de novo biosynthetic pathway for UDP-N-acetylglucosamine (UDP-GlcNAc). The C-terminal domain catalyzes the transfer of acetyl group from acetyl coenzyme A to glucosamine-1-phosphate (GlcN-1-P) to produce N-acetylglucosamine-1-phosphate (GlcNAc-1-P), which is converted into UDP-GlcNAc by the transfer of uridine 5-monophosphate (from uridine 5-triphosphate), a reaction catalyzed by the N-terminal domain.</text>
</comment>
<comment type="catalytic activity">
    <reaction evidence="1">
        <text>alpha-D-glucosamine 1-phosphate + acetyl-CoA = N-acetyl-alpha-D-glucosamine 1-phosphate + CoA + H(+)</text>
        <dbReference type="Rhea" id="RHEA:13725"/>
        <dbReference type="ChEBI" id="CHEBI:15378"/>
        <dbReference type="ChEBI" id="CHEBI:57287"/>
        <dbReference type="ChEBI" id="CHEBI:57288"/>
        <dbReference type="ChEBI" id="CHEBI:57776"/>
        <dbReference type="ChEBI" id="CHEBI:58516"/>
        <dbReference type="EC" id="2.3.1.157"/>
    </reaction>
</comment>
<comment type="catalytic activity">
    <reaction evidence="1">
        <text>N-acetyl-alpha-D-glucosamine 1-phosphate + UTP + H(+) = UDP-N-acetyl-alpha-D-glucosamine + diphosphate</text>
        <dbReference type="Rhea" id="RHEA:13509"/>
        <dbReference type="ChEBI" id="CHEBI:15378"/>
        <dbReference type="ChEBI" id="CHEBI:33019"/>
        <dbReference type="ChEBI" id="CHEBI:46398"/>
        <dbReference type="ChEBI" id="CHEBI:57705"/>
        <dbReference type="ChEBI" id="CHEBI:57776"/>
        <dbReference type="EC" id="2.7.7.23"/>
    </reaction>
</comment>
<comment type="cofactor">
    <cofactor evidence="1">
        <name>Mg(2+)</name>
        <dbReference type="ChEBI" id="CHEBI:18420"/>
    </cofactor>
    <text evidence="1">Binds 1 Mg(2+) ion per subunit.</text>
</comment>
<comment type="pathway">
    <text evidence="1">Nucleotide-sugar biosynthesis; UDP-N-acetyl-alpha-D-glucosamine biosynthesis; N-acetyl-alpha-D-glucosamine 1-phosphate from alpha-D-glucosamine 6-phosphate (route II): step 2/2.</text>
</comment>
<comment type="pathway">
    <text evidence="1">Nucleotide-sugar biosynthesis; UDP-N-acetyl-alpha-D-glucosamine biosynthesis; UDP-N-acetyl-alpha-D-glucosamine from N-acetyl-alpha-D-glucosamine 1-phosphate: step 1/1.</text>
</comment>
<comment type="pathway">
    <text evidence="1">Bacterial outer membrane biogenesis; LPS lipid A biosynthesis.</text>
</comment>
<comment type="subunit">
    <text evidence="1">Homotrimer.</text>
</comment>
<comment type="subcellular location">
    <subcellularLocation>
        <location evidence="1">Cytoplasm</location>
    </subcellularLocation>
</comment>
<comment type="similarity">
    <text evidence="1">In the N-terminal section; belongs to the N-acetylglucosamine-1-phosphate uridyltransferase family.</text>
</comment>
<comment type="similarity">
    <text evidence="1">In the C-terminal section; belongs to the transferase hexapeptide repeat family.</text>
</comment>
<protein>
    <recommendedName>
        <fullName evidence="1">Bifunctional protein GlmU</fullName>
    </recommendedName>
    <domain>
        <recommendedName>
            <fullName evidence="1">UDP-N-acetylglucosamine pyrophosphorylase</fullName>
            <ecNumber evidence="1">2.7.7.23</ecNumber>
        </recommendedName>
        <alternativeName>
            <fullName evidence="1">N-acetylglucosamine-1-phosphate uridyltransferase</fullName>
        </alternativeName>
    </domain>
    <domain>
        <recommendedName>
            <fullName evidence="1">Glucosamine-1-phosphate N-acetyltransferase</fullName>
            <ecNumber evidence="1">2.3.1.157</ecNumber>
        </recommendedName>
    </domain>
</protein>
<dbReference type="EC" id="2.7.7.23" evidence="1"/>
<dbReference type="EC" id="2.3.1.157" evidence="1"/>
<dbReference type="EMBL" id="AP008229">
    <property type="protein sequence ID" value="BAE67428.1"/>
    <property type="molecule type" value="Genomic_DNA"/>
</dbReference>
<dbReference type="RefSeq" id="WP_011407581.1">
    <property type="nucleotide sequence ID" value="NC_007705.1"/>
</dbReference>
<dbReference type="SMR" id="Q2P7P9"/>
<dbReference type="KEGG" id="xom:XOO0673"/>
<dbReference type="HOGENOM" id="CLU_029499_15_2_6"/>
<dbReference type="BRENDA" id="2.7.7.23">
    <property type="organism ID" value="9368"/>
</dbReference>
<dbReference type="UniPathway" id="UPA00113">
    <property type="reaction ID" value="UER00532"/>
</dbReference>
<dbReference type="UniPathway" id="UPA00113">
    <property type="reaction ID" value="UER00533"/>
</dbReference>
<dbReference type="UniPathway" id="UPA00973"/>
<dbReference type="GO" id="GO:0005737">
    <property type="term" value="C:cytoplasm"/>
    <property type="evidence" value="ECO:0007669"/>
    <property type="project" value="UniProtKB-SubCell"/>
</dbReference>
<dbReference type="GO" id="GO:0016020">
    <property type="term" value="C:membrane"/>
    <property type="evidence" value="ECO:0007669"/>
    <property type="project" value="GOC"/>
</dbReference>
<dbReference type="GO" id="GO:0019134">
    <property type="term" value="F:glucosamine-1-phosphate N-acetyltransferase activity"/>
    <property type="evidence" value="ECO:0007669"/>
    <property type="project" value="UniProtKB-UniRule"/>
</dbReference>
<dbReference type="GO" id="GO:0000287">
    <property type="term" value="F:magnesium ion binding"/>
    <property type="evidence" value="ECO:0007669"/>
    <property type="project" value="UniProtKB-UniRule"/>
</dbReference>
<dbReference type="GO" id="GO:0003977">
    <property type="term" value="F:UDP-N-acetylglucosamine diphosphorylase activity"/>
    <property type="evidence" value="ECO:0007669"/>
    <property type="project" value="UniProtKB-UniRule"/>
</dbReference>
<dbReference type="GO" id="GO:0000902">
    <property type="term" value="P:cell morphogenesis"/>
    <property type="evidence" value="ECO:0007669"/>
    <property type="project" value="UniProtKB-UniRule"/>
</dbReference>
<dbReference type="GO" id="GO:0071555">
    <property type="term" value="P:cell wall organization"/>
    <property type="evidence" value="ECO:0007669"/>
    <property type="project" value="UniProtKB-KW"/>
</dbReference>
<dbReference type="GO" id="GO:0009245">
    <property type="term" value="P:lipid A biosynthetic process"/>
    <property type="evidence" value="ECO:0007669"/>
    <property type="project" value="UniProtKB-UniRule"/>
</dbReference>
<dbReference type="GO" id="GO:0009252">
    <property type="term" value="P:peptidoglycan biosynthetic process"/>
    <property type="evidence" value="ECO:0007669"/>
    <property type="project" value="UniProtKB-UniRule"/>
</dbReference>
<dbReference type="GO" id="GO:0008360">
    <property type="term" value="P:regulation of cell shape"/>
    <property type="evidence" value="ECO:0007669"/>
    <property type="project" value="UniProtKB-KW"/>
</dbReference>
<dbReference type="GO" id="GO:0006048">
    <property type="term" value="P:UDP-N-acetylglucosamine biosynthetic process"/>
    <property type="evidence" value="ECO:0007669"/>
    <property type="project" value="UniProtKB-UniPathway"/>
</dbReference>
<dbReference type="CDD" id="cd02540">
    <property type="entry name" value="GT2_GlmU_N_bac"/>
    <property type="match status" value="1"/>
</dbReference>
<dbReference type="CDD" id="cd03353">
    <property type="entry name" value="LbH_GlmU_C"/>
    <property type="match status" value="1"/>
</dbReference>
<dbReference type="Gene3D" id="2.160.10.10">
    <property type="entry name" value="Hexapeptide repeat proteins"/>
    <property type="match status" value="1"/>
</dbReference>
<dbReference type="Gene3D" id="3.90.550.10">
    <property type="entry name" value="Spore Coat Polysaccharide Biosynthesis Protein SpsA, Chain A"/>
    <property type="match status" value="1"/>
</dbReference>
<dbReference type="HAMAP" id="MF_01631">
    <property type="entry name" value="GlmU"/>
    <property type="match status" value="1"/>
</dbReference>
<dbReference type="InterPro" id="IPR005882">
    <property type="entry name" value="Bifunctional_GlmU"/>
</dbReference>
<dbReference type="InterPro" id="IPR050065">
    <property type="entry name" value="GlmU-like"/>
</dbReference>
<dbReference type="InterPro" id="IPR038009">
    <property type="entry name" value="GlmU_C_LbH"/>
</dbReference>
<dbReference type="InterPro" id="IPR001451">
    <property type="entry name" value="Hexapep"/>
</dbReference>
<dbReference type="InterPro" id="IPR025877">
    <property type="entry name" value="MobA-like_NTP_Trfase"/>
</dbReference>
<dbReference type="InterPro" id="IPR029044">
    <property type="entry name" value="Nucleotide-diphossugar_trans"/>
</dbReference>
<dbReference type="InterPro" id="IPR011004">
    <property type="entry name" value="Trimer_LpxA-like_sf"/>
</dbReference>
<dbReference type="NCBIfam" id="TIGR01173">
    <property type="entry name" value="glmU"/>
    <property type="match status" value="1"/>
</dbReference>
<dbReference type="PANTHER" id="PTHR43584:SF3">
    <property type="entry name" value="BIFUNCTIONAL PROTEIN GLMU"/>
    <property type="match status" value="1"/>
</dbReference>
<dbReference type="PANTHER" id="PTHR43584">
    <property type="entry name" value="NUCLEOTIDYL TRANSFERASE"/>
    <property type="match status" value="1"/>
</dbReference>
<dbReference type="Pfam" id="PF00132">
    <property type="entry name" value="Hexapep"/>
    <property type="match status" value="1"/>
</dbReference>
<dbReference type="Pfam" id="PF12804">
    <property type="entry name" value="NTP_transf_3"/>
    <property type="match status" value="1"/>
</dbReference>
<dbReference type="SUPFAM" id="SSF53448">
    <property type="entry name" value="Nucleotide-diphospho-sugar transferases"/>
    <property type="match status" value="1"/>
</dbReference>
<dbReference type="SUPFAM" id="SSF51161">
    <property type="entry name" value="Trimeric LpxA-like enzymes"/>
    <property type="match status" value="1"/>
</dbReference>
<dbReference type="PROSITE" id="PS00101">
    <property type="entry name" value="HEXAPEP_TRANSFERASES"/>
    <property type="match status" value="1"/>
</dbReference>
<reference key="1">
    <citation type="journal article" date="2005" name="Jpn. Agric. Res. Q.">
        <title>Genome sequence of Xanthomonas oryzae pv. oryzae suggests contribution of large numbers of effector genes and insertion sequences to its race diversity.</title>
        <authorList>
            <person name="Ochiai H."/>
            <person name="Inoue Y."/>
            <person name="Takeya M."/>
            <person name="Sasaki A."/>
            <person name="Kaku H."/>
        </authorList>
    </citation>
    <scope>NUCLEOTIDE SEQUENCE [LARGE SCALE GENOMIC DNA]</scope>
    <source>
        <strain>MAFF 311018</strain>
    </source>
</reference>
<organism>
    <name type="scientific">Xanthomonas oryzae pv. oryzae (strain MAFF 311018)</name>
    <dbReference type="NCBI Taxonomy" id="342109"/>
    <lineage>
        <taxon>Bacteria</taxon>
        <taxon>Pseudomonadati</taxon>
        <taxon>Pseudomonadota</taxon>
        <taxon>Gammaproteobacteria</taxon>
        <taxon>Lysobacterales</taxon>
        <taxon>Lysobacteraceae</taxon>
        <taxon>Xanthomonas</taxon>
    </lineage>
</organism>